<gene>
    <name type="primary">tmem267</name>
    <name type="synonym">c5orf28</name>
</gene>
<protein>
    <recommendedName>
        <fullName>Transmembrane protein 267</fullName>
    </recommendedName>
</protein>
<reference key="1">
    <citation type="submission" date="2004-07" db="EMBL/GenBank/DDBJ databases">
        <authorList>
            <consortium name="NIH - Xenopus Gene Collection (XGC) project"/>
        </authorList>
    </citation>
    <scope>NUCLEOTIDE SEQUENCE [LARGE SCALE MRNA]</scope>
    <source>
        <tissue>Embryo</tissue>
    </source>
</reference>
<keyword id="KW-0472">Membrane</keyword>
<keyword id="KW-1185">Reference proteome</keyword>
<keyword id="KW-0812">Transmembrane</keyword>
<keyword id="KW-1133">Transmembrane helix</keyword>
<proteinExistence type="evidence at transcript level"/>
<evidence type="ECO:0000255" key="1"/>
<evidence type="ECO:0000305" key="2"/>
<feature type="chain" id="PRO_0000281923" description="Transmembrane protein 267">
    <location>
        <begin position="1"/>
        <end position="215"/>
    </location>
</feature>
<feature type="transmembrane region" description="Helical" evidence="1">
    <location>
        <begin position="77"/>
        <end position="97"/>
    </location>
</feature>
<feature type="transmembrane region" description="Helical" evidence="1">
    <location>
        <begin position="114"/>
        <end position="134"/>
    </location>
</feature>
<feature type="transmembrane region" description="Helical" evidence="1">
    <location>
        <begin position="178"/>
        <end position="198"/>
    </location>
</feature>
<organism>
    <name type="scientific">Xenopus laevis</name>
    <name type="common">African clawed frog</name>
    <dbReference type="NCBI Taxonomy" id="8355"/>
    <lineage>
        <taxon>Eukaryota</taxon>
        <taxon>Metazoa</taxon>
        <taxon>Chordata</taxon>
        <taxon>Craniata</taxon>
        <taxon>Vertebrata</taxon>
        <taxon>Euteleostomi</taxon>
        <taxon>Amphibia</taxon>
        <taxon>Batrachia</taxon>
        <taxon>Anura</taxon>
        <taxon>Pipoidea</taxon>
        <taxon>Pipidae</taxon>
        <taxon>Xenopodinae</taxon>
        <taxon>Xenopus</taxon>
        <taxon>Xenopus</taxon>
    </lineage>
</organism>
<dbReference type="EMBL" id="BC077184">
    <property type="protein sequence ID" value="AAH77184.1"/>
    <property type="molecule type" value="mRNA"/>
</dbReference>
<dbReference type="RefSeq" id="NP_001086617.1">
    <property type="nucleotide sequence ID" value="NM_001093148.1"/>
</dbReference>
<dbReference type="DNASU" id="446452"/>
<dbReference type="GeneID" id="446452"/>
<dbReference type="KEGG" id="xla:446452"/>
<dbReference type="AGR" id="Xenbase:XB-GENE-5950123"/>
<dbReference type="CTD" id="446452"/>
<dbReference type="Xenbase" id="XB-GENE-5950123">
    <property type="gene designation" value="tmem267.L"/>
</dbReference>
<dbReference type="OMA" id="FYICTAC"/>
<dbReference type="OrthoDB" id="10014558at2759"/>
<dbReference type="Proteomes" id="UP000186698">
    <property type="component" value="Chromosome 1L"/>
</dbReference>
<dbReference type="Bgee" id="446452">
    <property type="expression patterns" value="Expressed in blastula and 19 other cell types or tissues"/>
</dbReference>
<dbReference type="GO" id="GO:0016020">
    <property type="term" value="C:membrane"/>
    <property type="evidence" value="ECO:0007669"/>
    <property type="project" value="UniProtKB-SubCell"/>
</dbReference>
<dbReference type="InterPro" id="IPR026572">
    <property type="entry name" value="TMEM267"/>
</dbReference>
<dbReference type="PANTHER" id="PTHR13628">
    <property type="entry name" value="TRANSMEMBRANE PROTEIN 267"/>
    <property type="match status" value="1"/>
</dbReference>
<dbReference type="PANTHER" id="PTHR13628:SF1">
    <property type="entry name" value="TRANSMEMBRANE PROTEIN 267"/>
    <property type="match status" value="1"/>
</dbReference>
<accession>Q6DED9</accession>
<name>TM267_XENLA</name>
<comment type="subcellular location">
    <subcellularLocation>
        <location evidence="2">Membrane</location>
        <topology evidence="2">Multi-pass membrane protein</topology>
    </subcellularLocation>
</comment>
<sequence>MASEMEKADALLHTFSTASAFSSLGLGLFCFVADRVQQATFIQQHDWLRALSDSTTHCVIGMWSWAIVIGLRKRSDFCEVALAGFFASIIDLDHFFLAGSVSLKAATNLQRRPPLHCSTLIPVVALALKFLMQLLRLKDSWCFLPWMLFISWTSHHVRDGIRHGLWICPFGNTAPLPYWLYVVITASLPSVCSLIMCLTGTRQLMTTKHGIHIDV</sequence>